<keyword id="KW-0438">Lignin biosynthesis</keyword>
<keyword id="KW-0489">Methyltransferase</keyword>
<keyword id="KW-0949">S-adenosyl-L-methionine</keyword>
<keyword id="KW-0808">Transferase</keyword>
<organism>
    <name type="scientific">Eucalyptus gunnii</name>
    <name type="common">Cider gum</name>
    <dbReference type="NCBI Taxonomy" id="3933"/>
    <lineage>
        <taxon>Eukaryota</taxon>
        <taxon>Viridiplantae</taxon>
        <taxon>Streptophyta</taxon>
        <taxon>Embryophyta</taxon>
        <taxon>Tracheophyta</taxon>
        <taxon>Spermatophyta</taxon>
        <taxon>Magnoliopsida</taxon>
        <taxon>eudicotyledons</taxon>
        <taxon>Gunneridae</taxon>
        <taxon>Pentapetalae</taxon>
        <taxon>rosids</taxon>
        <taxon>malvids</taxon>
        <taxon>Myrtales</taxon>
        <taxon>Myrtaceae</taxon>
        <taxon>Myrtoideae</taxon>
        <taxon>Eucalypteae</taxon>
        <taxon>Eucalyptus</taxon>
    </lineage>
</organism>
<comment type="function">
    <text>Catalyzes the conversion of caffeic acid to ferulic acid and of 5-hydroxyferulic acid to sinapic acid. The resulting products may subsequently be converted to the corresponding alcohols that are incorporated into lignins.</text>
</comment>
<comment type="catalytic activity">
    <reaction>
        <text>(E)-caffeate + S-adenosyl-L-methionine = (E)-ferulate + S-adenosyl-L-homocysteine + H(+)</text>
        <dbReference type="Rhea" id="RHEA:20225"/>
        <dbReference type="ChEBI" id="CHEBI:15378"/>
        <dbReference type="ChEBI" id="CHEBI:29749"/>
        <dbReference type="ChEBI" id="CHEBI:57770"/>
        <dbReference type="ChEBI" id="CHEBI:57856"/>
        <dbReference type="ChEBI" id="CHEBI:59789"/>
        <dbReference type="EC" id="2.1.1.68"/>
    </reaction>
</comment>
<comment type="pathway">
    <text>Aromatic compound metabolism; phenylpropanoid biosynthesis.</text>
</comment>
<comment type="subunit">
    <text evidence="1">Homodimer.</text>
</comment>
<comment type="similarity">
    <text evidence="2">Belongs to the class I-like SAM-binding methyltransferase superfamily. Cation-independent O-methyltransferase family. COMT subfamily.</text>
</comment>
<evidence type="ECO:0000250" key="1"/>
<evidence type="ECO:0000255" key="2">
    <source>
        <dbReference type="PROSITE-ProRule" id="PRU01020"/>
    </source>
</evidence>
<proteinExistence type="evidence at transcript level"/>
<gene>
    <name type="primary">OMT</name>
</gene>
<protein>
    <recommendedName>
        <fullName>Caffeic acid 3-O-methyltransferase</fullName>
        <shortName>CAOMT</shortName>
        <shortName>COMT</shortName>
        <ecNumber>2.1.1.68</ecNumber>
    </recommendedName>
    <alternativeName>
        <fullName>S-adenosysl-L-methionine:caffeic acid 3-O-methyltransferase</fullName>
    </alternativeName>
</protein>
<sequence length="366" mass="39914">MGSTGSETQMTPTQVSDEEANLFAMQLASASVLPMVLKAAIELDLLEIMAKAGPGAFLSPGEVAAQLPTQNPEAPVMLDRIFRLLASYSVLTCTLRNLPDGKVERLYGLAPVCKFLVKNEDGVSIAALNLMNQDKILMESWYYLKDAVLEGGIPFNKAYGMTAFEYHGTDPRFNKIFNRGMSDHSTITMKKILETYKGFEGLETVVDVGGGTGAVLSMIVAKYPSMKGINFDLPHVIEDAPPLPGVKHVGGDMFVSVPKGDAIFMKWICHDWSDDHCAKFLKNCYDALPNIGKVIVAECVLPVYPDTSLATKNVIHIDCIMLAHNPGGKERTQKEFETLAKGAGFQGFQVMCCAFGTHVMEFLKTA</sequence>
<feature type="chain" id="PRO_0000063202" description="Caffeic acid 3-O-methyltransferase">
    <location>
        <begin position="1"/>
        <end position="366"/>
    </location>
</feature>
<feature type="region of interest" description="Substrate binding" evidence="1">
    <location>
        <begin position="163"/>
        <end position="181"/>
    </location>
</feature>
<feature type="active site" description="Proton acceptor" evidence="2">
    <location>
        <position position="270"/>
    </location>
</feature>
<feature type="binding site" evidence="1">
    <location>
        <begin position="131"/>
        <end position="137"/>
    </location>
    <ligand>
        <name>substrate</name>
    </ligand>
</feature>
<feature type="binding site" evidence="2">
    <location>
        <position position="209"/>
    </location>
    <ligand>
        <name>S-adenosyl-L-methionine</name>
        <dbReference type="ChEBI" id="CHEBI:59789"/>
    </ligand>
</feature>
<feature type="binding site" evidence="2">
    <location>
        <position position="232"/>
    </location>
    <ligand>
        <name>S-adenosyl-L-methionine</name>
        <dbReference type="ChEBI" id="CHEBI:59789"/>
    </ligand>
</feature>
<feature type="binding site" evidence="2">
    <location>
        <position position="252"/>
    </location>
    <ligand>
        <name>S-adenosyl-L-methionine</name>
        <dbReference type="ChEBI" id="CHEBI:59789"/>
    </ligand>
</feature>
<feature type="binding site" evidence="2">
    <location>
        <position position="253"/>
    </location>
    <ligand>
        <name>S-adenosyl-L-methionine</name>
        <dbReference type="ChEBI" id="CHEBI:59789"/>
    </ligand>
</feature>
<feature type="binding site" evidence="2">
    <location>
        <position position="266"/>
    </location>
    <ligand>
        <name>S-adenosyl-L-methionine</name>
        <dbReference type="ChEBI" id="CHEBI:59789"/>
    </ligand>
</feature>
<accession>P46484</accession>
<name>COMT1_EUCGU</name>
<reference key="1">
    <citation type="journal article" date="1994" name="Plant Physiol.">
        <title>A cDNA encoding S-adenosyl-L-methionine:caffeic acid 3-O-methyltransferase from Eucalyptus.</title>
        <authorList>
            <person name="Poeydomenge O."/>
            <person name="Boudet A.M."/>
            <person name="Grima-Pettenati J."/>
        </authorList>
    </citation>
    <scope>NUCLEOTIDE SEQUENCE [MRNA]</scope>
    <source>
        <tissue>Xylem</tissue>
    </source>
</reference>
<dbReference type="EC" id="2.1.1.68"/>
<dbReference type="EMBL" id="X74814">
    <property type="protein sequence ID" value="CAA52814.1"/>
    <property type="molecule type" value="mRNA"/>
</dbReference>
<dbReference type="PIR" id="S40146">
    <property type="entry name" value="S40146"/>
</dbReference>
<dbReference type="SMR" id="P46484"/>
<dbReference type="UniPathway" id="UPA00711"/>
<dbReference type="GO" id="GO:0047763">
    <property type="term" value="F:caffeate O-methyltransferase activity"/>
    <property type="evidence" value="ECO:0007669"/>
    <property type="project" value="UniProtKB-EC"/>
</dbReference>
<dbReference type="GO" id="GO:0046983">
    <property type="term" value="F:protein dimerization activity"/>
    <property type="evidence" value="ECO:0007669"/>
    <property type="project" value="InterPro"/>
</dbReference>
<dbReference type="GO" id="GO:0009809">
    <property type="term" value="P:lignin biosynthetic process"/>
    <property type="evidence" value="ECO:0007669"/>
    <property type="project" value="UniProtKB-KW"/>
</dbReference>
<dbReference type="GO" id="GO:0032259">
    <property type="term" value="P:methylation"/>
    <property type="evidence" value="ECO:0007669"/>
    <property type="project" value="UniProtKB-KW"/>
</dbReference>
<dbReference type="CDD" id="cd02440">
    <property type="entry name" value="AdoMet_MTases"/>
    <property type="match status" value="1"/>
</dbReference>
<dbReference type="FunFam" id="1.10.10.10:FF:000357">
    <property type="entry name" value="Caffeic acid 3-O-methyltransferase"/>
    <property type="match status" value="1"/>
</dbReference>
<dbReference type="FunFam" id="3.40.50.150:FF:000061">
    <property type="entry name" value="Caffeic acid O-methyltransferase"/>
    <property type="match status" value="1"/>
</dbReference>
<dbReference type="Gene3D" id="3.40.50.150">
    <property type="entry name" value="Vaccinia Virus protein VP39"/>
    <property type="match status" value="1"/>
</dbReference>
<dbReference type="Gene3D" id="1.10.10.10">
    <property type="entry name" value="Winged helix-like DNA-binding domain superfamily/Winged helix DNA-binding domain"/>
    <property type="match status" value="1"/>
</dbReference>
<dbReference type="InterPro" id="IPR016461">
    <property type="entry name" value="COMT-like"/>
</dbReference>
<dbReference type="InterPro" id="IPR001077">
    <property type="entry name" value="O_MeTrfase_dom"/>
</dbReference>
<dbReference type="InterPro" id="IPR012967">
    <property type="entry name" value="Plant_O-MeTrfase_dimerisation"/>
</dbReference>
<dbReference type="InterPro" id="IPR029063">
    <property type="entry name" value="SAM-dependent_MTases_sf"/>
</dbReference>
<dbReference type="InterPro" id="IPR036388">
    <property type="entry name" value="WH-like_DNA-bd_sf"/>
</dbReference>
<dbReference type="InterPro" id="IPR036390">
    <property type="entry name" value="WH_DNA-bd_sf"/>
</dbReference>
<dbReference type="PANTHER" id="PTHR11746">
    <property type="entry name" value="O-METHYLTRANSFERASE"/>
    <property type="match status" value="1"/>
</dbReference>
<dbReference type="Pfam" id="PF08100">
    <property type="entry name" value="Dimerisation"/>
    <property type="match status" value="1"/>
</dbReference>
<dbReference type="Pfam" id="PF00891">
    <property type="entry name" value="Methyltransf_2"/>
    <property type="match status" value="1"/>
</dbReference>
<dbReference type="PIRSF" id="PIRSF005739">
    <property type="entry name" value="O-mtase"/>
    <property type="match status" value="1"/>
</dbReference>
<dbReference type="SUPFAM" id="SSF53335">
    <property type="entry name" value="S-adenosyl-L-methionine-dependent methyltransferases"/>
    <property type="match status" value="1"/>
</dbReference>
<dbReference type="SUPFAM" id="SSF46785">
    <property type="entry name" value="Winged helix' DNA-binding domain"/>
    <property type="match status" value="1"/>
</dbReference>
<dbReference type="PROSITE" id="PS51683">
    <property type="entry name" value="SAM_OMT_II"/>
    <property type="match status" value="1"/>
</dbReference>